<evidence type="ECO:0000255" key="1"/>
<evidence type="ECO:0000269" key="2">
    <source>
    </source>
</evidence>
<evidence type="ECO:0000305" key="3"/>
<gene>
    <name type="primary">U96/U97/U98/U99/U100</name>
</gene>
<feature type="chain" id="PRO_0000343643" description="Glycoprotein 105">
    <location>
        <begin position="1"/>
        <end position="650"/>
    </location>
</feature>
<feature type="transmembrane region" description="Helical; Signal-anchor for type II membrane protein" evidence="1">
    <location>
        <begin position="1"/>
        <end position="32"/>
    </location>
</feature>
<feature type="topological domain" description="Virion surface" evidence="1">
    <location>
        <begin position="33"/>
        <end position="650"/>
    </location>
</feature>
<feature type="glycosylation site" description="N-linked (GlcNAc...) asparagine; by host" evidence="1">
    <location>
        <position position="52"/>
    </location>
</feature>
<feature type="glycosylation site" description="N-linked (GlcNAc...) asparagine; by host" evidence="1">
    <location>
        <position position="290"/>
    </location>
</feature>
<feature type="glycosylation site" description="N-linked (GlcNAc...) asparagine; by host" evidence="1">
    <location>
        <position position="332"/>
    </location>
</feature>
<feature type="glycosylation site" description="N-linked (GlcNAc...) asparagine; by host" evidence="1">
    <location>
        <position position="338"/>
    </location>
</feature>
<feature type="glycosylation site" description="N-linked (GlcNAc...) asparagine; by host" evidence="1">
    <location>
        <position position="359"/>
    </location>
</feature>
<feature type="glycosylation site" description="N-linked (GlcNAc...) asparagine; by host" evidence="1">
    <location>
        <position position="422"/>
    </location>
</feature>
<feature type="glycosylation site" description="N-linked (GlcNAc...) asparagine; by host" evidence="1">
    <location>
        <position position="516"/>
    </location>
</feature>
<feature type="glycosylation site" description="N-linked (GlcNAc...) asparagine; by host" evidence="1">
    <location>
        <position position="552"/>
    </location>
</feature>
<comment type="subunit">
    <text evidence="2">Associates with the gp82-gp105 complex.</text>
</comment>
<comment type="subcellular location">
    <subcellularLocation>
        <location evidence="3">Virion membrane</location>
        <topology evidence="3">Single-pass type II membrane protein</topology>
    </subcellularLocation>
</comment>
<comment type="alternative products">
    <event type="alternative splicing"/>
    <isoform>
        <id>Q69489-1</id>
        <name>gp105</name>
        <sequence type="displayed"/>
    </isoform>
    <text>A number of isoforms are produced. The other components of the gp82-gp105 complex are most likely alternative products of the same gene.</text>
</comment>
<comment type="PTM">
    <text evidence="2">N-Glycosylated.</text>
</comment>
<comment type="miscellaneous">
    <molecule>Isoform gp105</molecule>
    <text>Transcribed from a highly spliced mRNA.</text>
</comment>
<name>GP105_HHV6G</name>
<dbReference type="EMBL" id="U23466">
    <property type="protein sequence ID" value="AAA92492.1"/>
    <property type="molecule type" value="Genomic_DNA"/>
</dbReference>
<dbReference type="EMBL" id="U23467">
    <property type="protein sequence ID" value="AAA92493.1"/>
    <property type="molecule type" value="mRNA"/>
</dbReference>
<dbReference type="GlyCosmos" id="Q69489">
    <property type="glycosylation" value="8 sites, No reported glycans"/>
</dbReference>
<dbReference type="GO" id="GO:0016020">
    <property type="term" value="C:membrane"/>
    <property type="evidence" value="ECO:0007669"/>
    <property type="project" value="UniProtKB-KW"/>
</dbReference>
<dbReference type="GO" id="GO:0019031">
    <property type="term" value="C:viral envelope"/>
    <property type="evidence" value="ECO:0007669"/>
    <property type="project" value="UniProtKB-KW"/>
</dbReference>
<dbReference type="GO" id="GO:0055036">
    <property type="term" value="C:virion membrane"/>
    <property type="evidence" value="ECO:0007669"/>
    <property type="project" value="UniProtKB-SubCell"/>
</dbReference>
<sequence length="650" mass="74563">MATARLGVMRPPRSCALIFLCAFSMATAPTNATAHRRAGTVKSTPPPEDKGNYTAKYYDKNIYFNIYEGRNSTPRRRTLWEIISKFSTSEMLSLKRVKAFVPVDDNPTTTLEDIADILNYAVCDDNSCGCTIETQARIMFGDIIICVPLSADNKGVRNFKDRIMPKGLSQILSSSLGLHLSLLYGAFGSNYNSLAYMRRLKPLTAMTAIAFCPMTTKLELRQNYKVKETLCELIVSIEILKIRNNGGQTMKTLTSFAIVRKDNDGQDWETCTRFAPVNIEDILRYKRAANDTCCRHRDVQHGRRTLESSNSWTQTQYFEPWQDIVDVYVPINDTHCPNDSYVVFETLQGFEWCSRLNKNETKNYLSSVLGFRNALFETEELMETIAMRLASQILSMVGQQGTTIRDIDPAIVSALWHSLPENLTTTNIKYDIASPTHMAPALCTIFVQTGTSKERFRNAGLLMVNNIFTVQGRYTTQNMFERKEYVYKHLGQALCQDGEILFQNEGQKFCRPLTDNRTIVYTMQDQVQKPLSVTWMDFNLVISDYGRDVINNLTKSAMLARKNGPRYLQMENGPRYLQMETFISDLFRHECYQDNYYVLDKKLQMFYPTTHSNELLFIPRKLRCPHLGRNLRFPHLGRNLRFPHVGIGSY</sequence>
<reference key="1">
    <citation type="journal article" date="1995" name="J. Virol.">
        <title>Identification and characterization of a cDNA derived from multiple splicing that encodes envelope glycoprotein gp105 of human herpesvirus 6.</title>
        <authorList>
            <person name="Pfeiffer B."/>
            <person name="Thomson B."/>
            <person name="Chandran B."/>
        </authorList>
    </citation>
    <scope>NUCLEOTIDE SEQUENCE [GENOMIC DNA / MRNA]</scope>
    <scope>ALTERNATIVE SPLICING</scope>
    <scope>SUBUNIT</scope>
    <scope>GLYCOSYLATION</scope>
</reference>
<organismHost>
    <name type="scientific">Homo sapiens</name>
    <name type="common">Human</name>
    <dbReference type="NCBI Taxonomy" id="9606"/>
</organismHost>
<organism>
    <name type="scientific">Human herpesvirus 6A (strain GS)</name>
    <name type="common">HHV-6 variant A</name>
    <name type="synonym">Human B lymphotropic virus</name>
    <dbReference type="NCBI Taxonomy" id="10369"/>
    <lineage>
        <taxon>Viruses</taxon>
        <taxon>Duplodnaviria</taxon>
        <taxon>Heunggongvirae</taxon>
        <taxon>Peploviricota</taxon>
        <taxon>Herviviricetes</taxon>
        <taxon>Herpesvirales</taxon>
        <taxon>Orthoherpesviridae</taxon>
        <taxon>Betaherpesvirinae</taxon>
        <taxon>Roseolovirus</taxon>
        <taxon>Roseolovirus humanbeta6a</taxon>
        <taxon>Human betaherpesvirus 6A</taxon>
    </lineage>
</organism>
<proteinExistence type="evidence at protein level"/>
<accession>Q69489</accession>
<accession>Q69488</accession>
<protein>
    <recommendedName>
        <fullName>Glycoprotein 105</fullName>
        <shortName>gp105</shortName>
    </recommendedName>
</protein>
<keyword id="KW-0025">Alternative splicing</keyword>
<keyword id="KW-0325">Glycoprotein</keyword>
<keyword id="KW-0472">Membrane</keyword>
<keyword id="KW-0735">Signal-anchor</keyword>
<keyword id="KW-0812">Transmembrane</keyword>
<keyword id="KW-1133">Transmembrane helix</keyword>
<keyword id="KW-0261">Viral envelope protein</keyword>
<keyword id="KW-0946">Virion</keyword>